<dbReference type="EC" id="4.2.1.20" evidence="1"/>
<dbReference type="EMBL" id="BA000012">
    <property type="protein sequence ID" value="BAB51585.1"/>
    <property type="molecule type" value="Genomic_DNA"/>
</dbReference>
<dbReference type="RefSeq" id="WP_010912924.1">
    <property type="nucleotide sequence ID" value="NC_002678.2"/>
</dbReference>
<dbReference type="SMR" id="Q98CN6"/>
<dbReference type="GeneID" id="66680713"/>
<dbReference type="KEGG" id="mlo:mlr5073"/>
<dbReference type="eggNOG" id="COG0159">
    <property type="taxonomic scope" value="Bacteria"/>
</dbReference>
<dbReference type="HOGENOM" id="CLU_016734_0_0_5"/>
<dbReference type="UniPathway" id="UPA00035">
    <property type="reaction ID" value="UER00044"/>
</dbReference>
<dbReference type="Proteomes" id="UP000000552">
    <property type="component" value="Chromosome"/>
</dbReference>
<dbReference type="GO" id="GO:0005829">
    <property type="term" value="C:cytosol"/>
    <property type="evidence" value="ECO:0007669"/>
    <property type="project" value="TreeGrafter"/>
</dbReference>
<dbReference type="GO" id="GO:0004834">
    <property type="term" value="F:tryptophan synthase activity"/>
    <property type="evidence" value="ECO:0007669"/>
    <property type="project" value="UniProtKB-UniRule"/>
</dbReference>
<dbReference type="CDD" id="cd04724">
    <property type="entry name" value="Tryptophan_synthase_alpha"/>
    <property type="match status" value="1"/>
</dbReference>
<dbReference type="FunFam" id="3.20.20.70:FF:000037">
    <property type="entry name" value="Tryptophan synthase alpha chain"/>
    <property type="match status" value="1"/>
</dbReference>
<dbReference type="Gene3D" id="3.20.20.70">
    <property type="entry name" value="Aldolase class I"/>
    <property type="match status" value="1"/>
</dbReference>
<dbReference type="HAMAP" id="MF_00131">
    <property type="entry name" value="Trp_synth_alpha"/>
    <property type="match status" value="1"/>
</dbReference>
<dbReference type="InterPro" id="IPR013785">
    <property type="entry name" value="Aldolase_TIM"/>
</dbReference>
<dbReference type="InterPro" id="IPR011060">
    <property type="entry name" value="RibuloseP-bd_barrel"/>
</dbReference>
<dbReference type="InterPro" id="IPR018204">
    <property type="entry name" value="Trp_synthase_alpha_AS"/>
</dbReference>
<dbReference type="InterPro" id="IPR002028">
    <property type="entry name" value="Trp_synthase_suA"/>
</dbReference>
<dbReference type="NCBIfam" id="TIGR00262">
    <property type="entry name" value="trpA"/>
    <property type="match status" value="1"/>
</dbReference>
<dbReference type="PANTHER" id="PTHR43406:SF1">
    <property type="entry name" value="TRYPTOPHAN SYNTHASE ALPHA CHAIN, CHLOROPLASTIC"/>
    <property type="match status" value="1"/>
</dbReference>
<dbReference type="PANTHER" id="PTHR43406">
    <property type="entry name" value="TRYPTOPHAN SYNTHASE, ALPHA CHAIN"/>
    <property type="match status" value="1"/>
</dbReference>
<dbReference type="Pfam" id="PF00290">
    <property type="entry name" value="Trp_syntA"/>
    <property type="match status" value="1"/>
</dbReference>
<dbReference type="SUPFAM" id="SSF51366">
    <property type="entry name" value="Ribulose-phoshate binding barrel"/>
    <property type="match status" value="1"/>
</dbReference>
<dbReference type="PROSITE" id="PS00167">
    <property type="entry name" value="TRP_SYNTHASE_ALPHA"/>
    <property type="match status" value="1"/>
</dbReference>
<proteinExistence type="inferred from homology"/>
<reference key="1">
    <citation type="journal article" date="2000" name="DNA Res.">
        <title>Complete genome structure of the nitrogen-fixing symbiotic bacterium Mesorhizobium loti.</title>
        <authorList>
            <person name="Kaneko T."/>
            <person name="Nakamura Y."/>
            <person name="Sato S."/>
            <person name="Asamizu E."/>
            <person name="Kato T."/>
            <person name="Sasamoto S."/>
            <person name="Watanabe A."/>
            <person name="Idesawa K."/>
            <person name="Ishikawa A."/>
            <person name="Kawashima K."/>
            <person name="Kimura T."/>
            <person name="Kishida Y."/>
            <person name="Kiyokawa C."/>
            <person name="Kohara M."/>
            <person name="Matsumoto M."/>
            <person name="Matsuno A."/>
            <person name="Mochizuki Y."/>
            <person name="Nakayama S."/>
            <person name="Nakazaki N."/>
            <person name="Shimpo S."/>
            <person name="Sugimoto M."/>
            <person name="Takeuchi C."/>
            <person name="Yamada M."/>
            <person name="Tabata S."/>
        </authorList>
    </citation>
    <scope>NUCLEOTIDE SEQUENCE [LARGE SCALE GENOMIC DNA]</scope>
    <source>
        <strain>LMG 29417 / CECT 9101 / MAFF 303099</strain>
    </source>
</reference>
<protein>
    <recommendedName>
        <fullName evidence="1">Tryptophan synthase alpha chain</fullName>
        <ecNumber evidence="1">4.2.1.20</ecNumber>
    </recommendedName>
</protein>
<keyword id="KW-0028">Amino-acid biosynthesis</keyword>
<keyword id="KW-0057">Aromatic amino acid biosynthesis</keyword>
<keyword id="KW-0456">Lyase</keyword>
<keyword id="KW-0822">Tryptophan biosynthesis</keyword>
<comment type="function">
    <text evidence="1">The alpha subunit is responsible for the aldol cleavage of indoleglycerol phosphate to indole and glyceraldehyde 3-phosphate.</text>
</comment>
<comment type="catalytic activity">
    <reaction evidence="1">
        <text>(1S,2R)-1-C-(indol-3-yl)glycerol 3-phosphate + L-serine = D-glyceraldehyde 3-phosphate + L-tryptophan + H2O</text>
        <dbReference type="Rhea" id="RHEA:10532"/>
        <dbReference type="ChEBI" id="CHEBI:15377"/>
        <dbReference type="ChEBI" id="CHEBI:33384"/>
        <dbReference type="ChEBI" id="CHEBI:57912"/>
        <dbReference type="ChEBI" id="CHEBI:58866"/>
        <dbReference type="ChEBI" id="CHEBI:59776"/>
        <dbReference type="EC" id="4.2.1.20"/>
    </reaction>
</comment>
<comment type="pathway">
    <text evidence="1">Amino-acid biosynthesis; L-tryptophan biosynthesis; L-tryptophan from chorismate: step 5/5.</text>
</comment>
<comment type="subunit">
    <text evidence="1">Tetramer of two alpha and two beta chains.</text>
</comment>
<comment type="similarity">
    <text evidence="1">Belongs to the TrpA family.</text>
</comment>
<feature type="chain" id="PRO_0000098831" description="Tryptophan synthase alpha chain">
    <location>
        <begin position="1"/>
        <end position="279"/>
    </location>
</feature>
<feature type="active site" description="Proton acceptor" evidence="1">
    <location>
        <position position="50"/>
    </location>
</feature>
<feature type="active site" description="Proton acceptor" evidence="1">
    <location>
        <position position="61"/>
    </location>
</feature>
<gene>
    <name evidence="1" type="primary">trpA</name>
    <name type="ordered locus">mlr5073</name>
</gene>
<organism>
    <name type="scientific">Mesorhizobium japonicum (strain LMG 29417 / CECT 9101 / MAFF 303099)</name>
    <name type="common">Mesorhizobium loti (strain MAFF 303099)</name>
    <dbReference type="NCBI Taxonomy" id="266835"/>
    <lineage>
        <taxon>Bacteria</taxon>
        <taxon>Pseudomonadati</taxon>
        <taxon>Pseudomonadota</taxon>
        <taxon>Alphaproteobacteria</taxon>
        <taxon>Hyphomicrobiales</taxon>
        <taxon>Phyllobacteriaceae</taxon>
        <taxon>Mesorhizobium</taxon>
    </lineage>
</organism>
<accession>Q98CN6</accession>
<evidence type="ECO:0000255" key="1">
    <source>
        <dbReference type="HAMAP-Rule" id="MF_00131"/>
    </source>
</evidence>
<name>TRPA_RHILO</name>
<sequence>MTTRIDRRMAKLKTEGRPALVTYFMGGDPDYDTSLSIMKALPGAGSDIIELGMPFSDPMADGPAIQAAGLRALKGGQTLVKTLKMASEFRAGDNETPIVLMGYYNPIYIYGVDRFLKDALASGIDGLIVVDLPPEMDEELCIPALKAGINFIRLATPTTDDKRLPKVLQNTSGFVYYVSMTGITGSALADTGKVAAAVNRIKGHTDLPVCVGFGVKTAEQARVIGANADGVVVGTAIVNAVANVLGPKGEKTADPAEAVATLVSGLAQGVRSARLAAAE</sequence>